<keyword id="KW-0325">Glycoprotein</keyword>
<keyword id="KW-0446">Lipid-binding</keyword>
<keyword id="KW-0458">Lysosome</keyword>
<keyword id="KW-0472">Membrane</keyword>
<keyword id="KW-1185">Reference proteome</keyword>
<keyword id="KW-0812">Transmembrane</keyword>
<keyword id="KW-1133">Transmembrane helix</keyword>
<name>LYCHS_PONAB</name>
<protein>
    <recommendedName>
        <fullName evidence="1">Lysosomal cholesterol signaling protein</fullName>
        <shortName evidence="1">LYCHOS</shortName>
    </recommendedName>
    <alternativeName>
        <fullName>Integral membrane protein GPR155</fullName>
    </alternativeName>
</protein>
<sequence>MNSFSNLPAENLTIAVNMTKTLPTAVMHGFNSTNDPPSMSITRLFPALLECFGIVLCGYIAGRANVITSTQAKGLGNFVSRFALPALLFKNMVVLNFSNVDWSFLYSILIAKASVFFIVCVLTLLVASPDSRFSKAGLFPIFATQSNDFALGYPIVEALYQTTYPEYLQYIYLVAPISLMMLNPIGFIFCEIQKWKDTQNASQNKIKIVGLGLLRVLQNPIVFMVFIGIAFNFILDRKVPVYVENFLDGLGNSFSGSALFYLGLTMVGKIKRLKKSAFVVLILLITAKLLVLPLLCREMVELLDKGDSVVNHTSLSNYAFLYGVFPVAPGVAIFATQFNMEVEIITSGMVISTFVSAPIMYVSAWLLTFPTMDPKPLAYAIQNVSFDISIVSLISLIWSQAILLLSKKYKQLPHMLTTNLLIAQSIVCAGMMIWNFVKEKNFVGQILVFVLLYSSLYSTYLWTGLLAISLFLLKKRERVQIPVGIIIISGWGIPALLVGVLLITGKHSGDSIDSAFFYGKEQMITTAVTLFCSILIAGISLMCMNRTAQAGSYEGFDQSQSHKVVEPGNTAFEEGPAPVNEPELFTSSIPETSCCSCSMGNGELHCPSIEPIANTSTSEPVIPSFEKNNHCVSRCNSQSCILAQEEEQYLQSGDQQLTRHVLLCLLLIIGLFANLSSCLWWLFNQEPGRLYVELQFFCAVFNFGQGFISFGIFGLDKHLIILPFKRRLEFLWNNKETAENRDSPVSEEIKMTCQQFIHYHRDLCIRNIVKERRCGAKTSAGTFCGCDLVNWLIEVGLASDRGEAVIYGDRLVQGGVIQHITNEYEFRDEYLFYRFLQKSPEQSPPVINANTLQQERYKEIEHSSPPSHSPKT</sequence>
<reference key="1">
    <citation type="submission" date="2004-11" db="EMBL/GenBank/DDBJ databases">
        <authorList>
            <consortium name="The German cDNA consortium"/>
        </authorList>
    </citation>
    <scope>NUCLEOTIDE SEQUENCE [LARGE SCALE MRNA]</scope>
    <source>
        <tissue>Brain cortex</tissue>
    </source>
</reference>
<gene>
    <name type="primary">GPR155</name>
</gene>
<dbReference type="EMBL" id="CR859482">
    <property type="protein sequence ID" value="CAH91653.1"/>
    <property type="molecule type" value="mRNA"/>
</dbReference>
<dbReference type="RefSeq" id="NP_001125971.1">
    <property type="nucleotide sequence ID" value="NM_001132499.1"/>
</dbReference>
<dbReference type="SMR" id="Q5R9A7"/>
<dbReference type="FunCoup" id="Q5R9A7">
    <property type="interactions" value="274"/>
</dbReference>
<dbReference type="GlyCosmos" id="Q5R9A7">
    <property type="glycosylation" value="8 sites, No reported glycans"/>
</dbReference>
<dbReference type="GeneID" id="100172908"/>
<dbReference type="KEGG" id="pon:100172908"/>
<dbReference type="CTD" id="151556"/>
<dbReference type="eggNOG" id="ENOG502QQ69">
    <property type="taxonomic scope" value="Eukaryota"/>
</dbReference>
<dbReference type="InParanoid" id="Q5R9A7"/>
<dbReference type="OrthoDB" id="2133778at2759"/>
<dbReference type="Proteomes" id="UP000001595">
    <property type="component" value="Unplaced"/>
</dbReference>
<dbReference type="GO" id="GO:0005765">
    <property type="term" value="C:lysosomal membrane"/>
    <property type="evidence" value="ECO:0000250"/>
    <property type="project" value="UniProtKB"/>
</dbReference>
<dbReference type="GO" id="GO:0015485">
    <property type="term" value="F:cholesterol binding"/>
    <property type="evidence" value="ECO:0000250"/>
    <property type="project" value="UniProtKB"/>
</dbReference>
<dbReference type="GO" id="GO:0034198">
    <property type="term" value="P:cellular response to amino acid starvation"/>
    <property type="evidence" value="ECO:0000250"/>
    <property type="project" value="UniProtKB"/>
</dbReference>
<dbReference type="GO" id="GO:0071397">
    <property type="term" value="P:cellular response to cholesterol"/>
    <property type="evidence" value="ECO:0000250"/>
    <property type="project" value="UniProtKB"/>
</dbReference>
<dbReference type="GO" id="GO:0035556">
    <property type="term" value="P:intracellular signal transduction"/>
    <property type="evidence" value="ECO:0007669"/>
    <property type="project" value="InterPro"/>
</dbReference>
<dbReference type="GO" id="GO:0030514">
    <property type="term" value="P:negative regulation of BMP signaling pathway"/>
    <property type="evidence" value="ECO:0007669"/>
    <property type="project" value="TreeGrafter"/>
</dbReference>
<dbReference type="GO" id="GO:1904263">
    <property type="term" value="P:positive regulation of TORC1 signaling"/>
    <property type="evidence" value="ECO:0000250"/>
    <property type="project" value="UniProtKB"/>
</dbReference>
<dbReference type="GO" id="GO:0055085">
    <property type="term" value="P:transmembrane transport"/>
    <property type="evidence" value="ECO:0007669"/>
    <property type="project" value="InterPro"/>
</dbReference>
<dbReference type="CDD" id="cd04443">
    <property type="entry name" value="DEP_GPR155"/>
    <property type="match status" value="1"/>
</dbReference>
<dbReference type="FunFam" id="1.10.10.10:FF:000697">
    <property type="entry name" value="G protein-coupled receptor 155"/>
    <property type="match status" value="1"/>
</dbReference>
<dbReference type="FunFam" id="1.20.1070.10:FF:000298">
    <property type="entry name" value="Integral membrane protein GPR155"/>
    <property type="match status" value="1"/>
</dbReference>
<dbReference type="Gene3D" id="1.20.1070.10">
    <property type="entry name" value="Rhodopsin 7-helix transmembrane proteins"/>
    <property type="match status" value="1"/>
</dbReference>
<dbReference type="Gene3D" id="1.10.10.10">
    <property type="entry name" value="Winged helix-like DNA-binding domain superfamily/Winged helix DNA-binding domain"/>
    <property type="match status" value="1"/>
</dbReference>
<dbReference type="InterPro" id="IPR000591">
    <property type="entry name" value="DEP_dom"/>
</dbReference>
<dbReference type="InterPro" id="IPR037368">
    <property type="entry name" value="GPR155_DEP"/>
</dbReference>
<dbReference type="InterPro" id="IPR004776">
    <property type="entry name" value="Mem_transp_PIN-like"/>
</dbReference>
<dbReference type="InterPro" id="IPR051832">
    <property type="entry name" value="mTOR-Rac_regulators"/>
</dbReference>
<dbReference type="InterPro" id="IPR036388">
    <property type="entry name" value="WH-like_DNA-bd_sf"/>
</dbReference>
<dbReference type="InterPro" id="IPR036390">
    <property type="entry name" value="WH_DNA-bd_sf"/>
</dbReference>
<dbReference type="PANTHER" id="PTHR22829">
    <property type="entry name" value="DEP DOMAIN PROTEIN"/>
    <property type="match status" value="1"/>
</dbReference>
<dbReference type="PANTHER" id="PTHR22829:SF5">
    <property type="entry name" value="INTEGRAL MEMBRANE PROTEIN GPR155"/>
    <property type="match status" value="1"/>
</dbReference>
<dbReference type="Pfam" id="PF00610">
    <property type="entry name" value="DEP"/>
    <property type="match status" value="1"/>
</dbReference>
<dbReference type="Pfam" id="PF03547">
    <property type="entry name" value="Mem_trans"/>
    <property type="match status" value="1"/>
</dbReference>
<dbReference type="SMART" id="SM00049">
    <property type="entry name" value="DEP"/>
    <property type="match status" value="1"/>
</dbReference>
<dbReference type="SUPFAM" id="SSF46785">
    <property type="entry name" value="Winged helix' DNA-binding domain"/>
    <property type="match status" value="1"/>
</dbReference>
<dbReference type="PROSITE" id="PS50186">
    <property type="entry name" value="DEP"/>
    <property type="match status" value="1"/>
</dbReference>
<organism>
    <name type="scientific">Pongo abelii</name>
    <name type="common">Sumatran orangutan</name>
    <name type="synonym">Pongo pygmaeus abelii</name>
    <dbReference type="NCBI Taxonomy" id="9601"/>
    <lineage>
        <taxon>Eukaryota</taxon>
        <taxon>Metazoa</taxon>
        <taxon>Chordata</taxon>
        <taxon>Craniata</taxon>
        <taxon>Vertebrata</taxon>
        <taxon>Euteleostomi</taxon>
        <taxon>Mammalia</taxon>
        <taxon>Eutheria</taxon>
        <taxon>Euarchontoglires</taxon>
        <taxon>Primates</taxon>
        <taxon>Haplorrhini</taxon>
        <taxon>Catarrhini</taxon>
        <taxon>Hominidae</taxon>
        <taxon>Pongo</taxon>
    </lineage>
</organism>
<feature type="chain" id="PRO_0000087552" description="Lysosomal cholesterol signaling protein">
    <location>
        <begin position="1"/>
        <end position="872"/>
    </location>
</feature>
<feature type="topological domain" description="Lumenal" evidence="1">
    <location>
        <begin position="1"/>
        <end position="40"/>
    </location>
</feature>
<feature type="transmembrane region" description="Helical; Name=1" evidence="1">
    <location>
        <begin position="41"/>
        <end position="61"/>
    </location>
</feature>
<feature type="topological domain" description="Cytoplasmic" evidence="1">
    <location>
        <begin position="62"/>
        <end position="81"/>
    </location>
</feature>
<feature type="transmembrane region" description="Helical; Name=2" evidence="1">
    <location>
        <begin position="82"/>
        <end position="102"/>
    </location>
</feature>
<feature type="topological domain" description="Lumenal" evidence="1">
    <location>
        <begin position="103"/>
        <end position="106"/>
    </location>
</feature>
<feature type="transmembrane region" description="Helical; Name=3" evidence="1">
    <location>
        <begin position="107"/>
        <end position="127"/>
    </location>
</feature>
<feature type="topological domain" description="Cytoplasmic" evidence="1">
    <location>
        <begin position="128"/>
        <end position="135"/>
    </location>
</feature>
<feature type="transmembrane region" description="Discontinuously helical; Name=4" evidence="1">
    <location>
        <begin position="136"/>
        <end position="156"/>
    </location>
</feature>
<feature type="topological domain" description="Lumenal" evidence="1">
    <location>
        <begin position="157"/>
        <end position="169"/>
    </location>
</feature>
<feature type="transmembrane region" description="Helical; Name=5" evidence="1">
    <location>
        <begin position="170"/>
        <end position="190"/>
    </location>
</feature>
<feature type="topological domain" description="Cytoplasmic" evidence="1">
    <location>
        <begin position="191"/>
        <end position="215"/>
    </location>
</feature>
<feature type="transmembrane region" description="Discontinuously helical; Name=6" evidence="1">
    <location>
        <begin position="216"/>
        <end position="236"/>
    </location>
</feature>
<feature type="topological domain" description="Lumenal" evidence="1">
    <location>
        <begin position="237"/>
        <end position="245"/>
    </location>
</feature>
<feature type="transmembrane region" description="Discontinuously helical; Name=7" evidence="1">
    <location>
        <begin position="246"/>
        <end position="266"/>
    </location>
</feature>
<feature type="topological domain" description="Cytoplasmic" evidence="1">
    <location>
        <begin position="267"/>
        <end position="275"/>
    </location>
</feature>
<feature type="transmembrane region" description="Helical; Name=8" evidence="1">
    <location>
        <begin position="276"/>
        <end position="296"/>
    </location>
</feature>
<feature type="topological domain" description="Lumenal" evidence="1">
    <location>
        <begin position="297"/>
        <end position="317"/>
    </location>
</feature>
<feature type="transmembrane region" description="Discontinuously helical; Name=9" evidence="1">
    <location>
        <begin position="318"/>
        <end position="338"/>
    </location>
</feature>
<feature type="topological domain" description="Cytoplasmic" evidence="1">
    <location>
        <begin position="339"/>
        <end position="348"/>
    </location>
</feature>
<feature type="transmembrane region" description="Helical; Name=10" evidence="1">
    <location>
        <begin position="349"/>
        <end position="369"/>
    </location>
</feature>
<feature type="topological domain" description="Lumenal" evidence="1">
    <location>
        <begin position="370"/>
        <end position="383"/>
    </location>
</feature>
<feature type="transmembrane region" description="Helical; Name=11" evidence="1">
    <location>
        <begin position="384"/>
        <end position="404"/>
    </location>
</feature>
<feature type="topological domain" description="Cytoplasmic" evidence="1">
    <location>
        <begin position="405"/>
        <end position="416"/>
    </location>
</feature>
<feature type="transmembrane region" description="Helical; Name=12" evidence="1">
    <location>
        <begin position="417"/>
        <end position="437"/>
    </location>
</feature>
<feature type="topological domain" description="Lumenal" evidence="1">
    <location>
        <begin position="438"/>
        <end position="440"/>
    </location>
</feature>
<feature type="transmembrane region" description="Helical; Name=13" evidence="1">
    <location>
        <begin position="441"/>
        <end position="461"/>
    </location>
</feature>
<feature type="topological domain" description="Cytoplasmic" evidence="1">
    <location>
        <begin position="462"/>
        <end position="482"/>
    </location>
</feature>
<feature type="transmembrane region" description="Helical; Name=14" evidence="1">
    <location>
        <begin position="483"/>
        <end position="503"/>
    </location>
</feature>
<feature type="topological domain" description="Lumenal" evidence="1">
    <location>
        <begin position="504"/>
        <end position="522"/>
    </location>
</feature>
<feature type="transmembrane region" description="Helical; Name=15" evidence="1">
    <location>
        <begin position="523"/>
        <end position="543"/>
    </location>
</feature>
<feature type="topological domain" description="Cytoplasmic" evidence="1">
    <location>
        <begin position="544"/>
        <end position="662"/>
    </location>
</feature>
<feature type="transmembrane region" description="Helical; Name=16" evidence="1">
    <location>
        <begin position="663"/>
        <end position="683"/>
    </location>
</feature>
<feature type="topological domain" description="Lumenal" evidence="1">
    <location>
        <begin position="684"/>
        <end position="693"/>
    </location>
</feature>
<feature type="transmembrane region" description="Helical; Name=17" evidence="1">
    <location>
        <begin position="694"/>
        <end position="714"/>
    </location>
</feature>
<feature type="topological domain" description="Cytoplasmic" evidence="1">
    <location>
        <begin position="715"/>
        <end position="872"/>
    </location>
</feature>
<feature type="domain" description="DEP" evidence="3">
    <location>
        <begin position="759"/>
        <end position="837"/>
    </location>
</feature>
<feature type="region of interest" description="PIN-like transporter" evidence="1">
    <location>
        <begin position="3"/>
        <end position="372"/>
    </location>
</feature>
<feature type="region of interest" description="GPCR" evidence="1">
    <location>
        <begin position="382"/>
        <end position="719"/>
    </location>
</feature>
<feature type="binding site" evidence="1">
    <location>
        <position position="45"/>
    </location>
    <ligand>
        <name>cholesterol</name>
        <dbReference type="ChEBI" id="CHEBI:16113"/>
    </ligand>
</feature>
<feature type="binding site" evidence="1">
    <location>
        <position position="59"/>
    </location>
    <ligand>
        <name>cholesterol</name>
        <dbReference type="ChEBI" id="CHEBI:16113"/>
    </ligand>
</feature>
<feature type="binding site" evidence="1">
    <location>
        <position position="268"/>
    </location>
    <ligand>
        <name>cholesterol</name>
        <dbReference type="ChEBI" id="CHEBI:16113"/>
    </ligand>
</feature>
<feature type="binding site" evidence="1">
    <location>
        <position position="269"/>
    </location>
    <ligand>
        <name>cholesterol</name>
        <dbReference type="ChEBI" id="CHEBI:16113"/>
    </ligand>
</feature>
<feature type="binding site" evidence="1">
    <location>
        <position position="270"/>
    </location>
    <ligand>
        <name>cholesterol</name>
        <dbReference type="ChEBI" id="CHEBI:16113"/>
    </ligand>
</feature>
<feature type="binding site" evidence="1">
    <location>
        <position position="659"/>
    </location>
    <ligand>
        <name>cholesterol</name>
        <dbReference type="ChEBI" id="CHEBI:16113"/>
    </ligand>
</feature>
<feature type="glycosylation site" description="N-linked (GlcNAc...) asparagine" evidence="2">
    <location>
        <position position="11"/>
    </location>
</feature>
<feature type="glycosylation site" description="N-linked (GlcNAc...) asparagine" evidence="2">
    <location>
        <position position="17"/>
    </location>
</feature>
<feature type="glycosylation site" description="N-linked (GlcNAc...) asparagine" evidence="2">
    <location>
        <position position="31"/>
    </location>
</feature>
<feature type="glycosylation site" description="N-linked (GlcNAc...) asparagine" evidence="2">
    <location>
        <position position="311"/>
    </location>
</feature>
<feature type="glycosylation site" description="N-linked (GlcNAc...) asparagine" evidence="2">
    <location>
        <position position="383"/>
    </location>
</feature>
<proteinExistence type="evidence at transcript level"/>
<comment type="function">
    <text evidence="1">Cholesterol-binding protein that acts as a regulator of mTORC1 signaling pathway (By similarity). Acts as a sensor of cholesterol to signal cholesterol sufficiency to mTORC1: in presence of cholesterol, binds cholesterol, leading to disruption of the interaction between the GATOR1 and KICSTOR complexes and promotion of mTORC1 signaling (By similarity). Upon cholesterol starvation, GPR155/LYCHOS is unable to perturb the association between GATOR1 and KICSTOR, leading to mTORC1 signaling inhibition (By similarity). Binds indole-3-acetic acid and may play a role in tryptophan metabolism (By similarity).</text>
</comment>
<comment type="subunit">
    <text evidence="1">Homodimer; via the transporter region and DEP domain (By similarity). Interacts with the GATOR1 complex; preventing interaction between GATOR1 and KICSTOR; interaction is disrupted upon cholesterol starvation (By similarity).</text>
</comment>
<comment type="subcellular location">
    <subcellularLocation>
        <location evidence="1">Lysosome membrane</location>
        <topology evidence="1">Multi-pass membrane protein</topology>
    </subcellularLocation>
</comment>
<comment type="domain">
    <text evidence="1">Cholesterol binds at the interface between the PIN-like transporter region and the GPCR domain; these two regions likely coordinate to sense cholesterol and regulate mTORC1 activation.</text>
</comment>
<evidence type="ECO:0000250" key="1">
    <source>
        <dbReference type="UniProtKB" id="Q7Z3F1"/>
    </source>
</evidence>
<evidence type="ECO:0000255" key="2"/>
<evidence type="ECO:0000255" key="3">
    <source>
        <dbReference type="PROSITE-ProRule" id="PRU00066"/>
    </source>
</evidence>
<accession>Q5R9A7</accession>